<organism>
    <name type="scientific">Ruthia magnifica subsp. Calyptogena magnifica</name>
    <dbReference type="NCBI Taxonomy" id="413404"/>
    <lineage>
        <taxon>Bacteria</taxon>
        <taxon>Pseudomonadati</taxon>
        <taxon>Pseudomonadota</taxon>
        <taxon>Gammaproteobacteria</taxon>
        <taxon>Candidatus Pseudothioglobaceae</taxon>
        <taxon>Candidatus Ruthturnera</taxon>
    </lineage>
</organism>
<name>CYSG_RUTMC</name>
<reference key="1">
    <citation type="journal article" date="2007" name="Science">
        <title>The Calyptogena magnifica chemoautotrophic symbiont genome.</title>
        <authorList>
            <person name="Newton I.L.G."/>
            <person name="Woyke T."/>
            <person name="Auchtung T.A."/>
            <person name="Dilly G.F."/>
            <person name="Dutton R.J."/>
            <person name="Fisher M.C."/>
            <person name="Fontanez K.M."/>
            <person name="Lau E."/>
            <person name="Stewart F.J."/>
            <person name="Richardson P.M."/>
            <person name="Barry K.W."/>
            <person name="Saunders E."/>
            <person name="Detter J.C."/>
            <person name="Wu D."/>
            <person name="Eisen J.A."/>
            <person name="Cavanaugh C.M."/>
        </authorList>
    </citation>
    <scope>NUCLEOTIDE SEQUENCE [LARGE SCALE GENOMIC DNA]</scope>
</reference>
<feature type="chain" id="PRO_0000330550" description="Siroheme synthase">
    <location>
        <begin position="1"/>
        <end position="472"/>
    </location>
</feature>
<feature type="region of interest" description="Precorrin-2 dehydrogenase /sirohydrochlorin ferrochelatase" evidence="1">
    <location>
        <begin position="1"/>
        <end position="203"/>
    </location>
</feature>
<feature type="region of interest" description="Uroporphyrinogen-III C-methyltransferase" evidence="1">
    <location>
        <begin position="216"/>
        <end position="472"/>
    </location>
</feature>
<feature type="active site" description="Proton acceptor" evidence="1">
    <location>
        <position position="248"/>
    </location>
</feature>
<feature type="active site" description="Proton donor" evidence="1">
    <location>
        <position position="270"/>
    </location>
</feature>
<feature type="binding site" evidence="1">
    <location>
        <begin position="22"/>
        <end position="23"/>
    </location>
    <ligand>
        <name>NAD(+)</name>
        <dbReference type="ChEBI" id="CHEBI:57540"/>
    </ligand>
</feature>
<feature type="binding site" evidence="1">
    <location>
        <begin position="43"/>
        <end position="44"/>
    </location>
    <ligand>
        <name>NAD(+)</name>
        <dbReference type="ChEBI" id="CHEBI:57540"/>
    </ligand>
</feature>
<feature type="binding site" evidence="1">
    <location>
        <position position="225"/>
    </location>
    <ligand>
        <name>S-adenosyl-L-methionine</name>
        <dbReference type="ChEBI" id="CHEBI:59789"/>
    </ligand>
</feature>
<feature type="binding site" evidence="1">
    <location>
        <begin position="301"/>
        <end position="303"/>
    </location>
    <ligand>
        <name>S-adenosyl-L-methionine</name>
        <dbReference type="ChEBI" id="CHEBI:59789"/>
    </ligand>
</feature>
<feature type="binding site" evidence="1">
    <location>
        <position position="306"/>
    </location>
    <ligand>
        <name>S-adenosyl-L-methionine</name>
        <dbReference type="ChEBI" id="CHEBI:59789"/>
    </ligand>
</feature>
<feature type="binding site" evidence="1">
    <location>
        <begin position="331"/>
        <end position="332"/>
    </location>
    <ligand>
        <name>S-adenosyl-L-methionine</name>
        <dbReference type="ChEBI" id="CHEBI:59789"/>
    </ligand>
</feature>
<feature type="binding site" evidence="1">
    <location>
        <position position="383"/>
    </location>
    <ligand>
        <name>S-adenosyl-L-methionine</name>
        <dbReference type="ChEBI" id="CHEBI:59789"/>
    </ligand>
</feature>
<feature type="binding site" evidence="1">
    <location>
        <position position="412"/>
    </location>
    <ligand>
        <name>S-adenosyl-L-methionine</name>
        <dbReference type="ChEBI" id="CHEBI:59789"/>
    </ligand>
</feature>
<feature type="modified residue" description="Phosphoserine" evidence="1">
    <location>
        <position position="128"/>
    </location>
</feature>
<sequence length="472" mass="52011">MNYLPIFIDIKQKPCLVVGGGDIAYRKINFLLKAHGQVTCIAKSSCKNVVKLASDNKIIYFEKSFEASDIKEQVLIVSATDNTSLNKQVSELSNQNNIPVNVVDSPDLCTFIMPSIVDRSPIVIAISSAGKAPVLARLIRAKLESTLPHAYGKLAELAGNFRDKVKEKFSNIEDRRYFWEKTFSGIIAEKVFSGKIQEAKADLQVQLDGSTKTQVGEVYLVGGGPGDPDLLTFKALRLMQQADVVLYDRLVSNGVMGLVRRDAQLIYVGKERDNHVVPQGDINQLLVNLAKQGRRVCRLKGGDPFIFGRGGEEIETLAENGISFQVVPGITAASGCSTYSGIPLTHRDYSQSCRFVTGHLKDGSMNLPWHELSVEQQTIVFYMALNGARHLSEQLITHGMSPDMPVALVEKGTTPEQKVYTTTLKKLPDLVKNEIIHAPTLIIIGEVVTLREKLNWFDAKLASSKKSYLFGG</sequence>
<comment type="function">
    <text evidence="1">Multifunctional enzyme that catalyzes the SAM-dependent methylations of uroporphyrinogen III at position C-2 and C-7 to form precorrin-2 via precorrin-1. Then it catalyzes the NAD-dependent ring dehydrogenation of precorrin-2 to yield sirohydrochlorin. Finally, it catalyzes the ferrochelation of sirohydrochlorin to yield siroheme.</text>
</comment>
<comment type="catalytic activity">
    <reaction evidence="1">
        <text>uroporphyrinogen III + 2 S-adenosyl-L-methionine = precorrin-2 + 2 S-adenosyl-L-homocysteine + H(+)</text>
        <dbReference type="Rhea" id="RHEA:32459"/>
        <dbReference type="ChEBI" id="CHEBI:15378"/>
        <dbReference type="ChEBI" id="CHEBI:57308"/>
        <dbReference type="ChEBI" id="CHEBI:57856"/>
        <dbReference type="ChEBI" id="CHEBI:58827"/>
        <dbReference type="ChEBI" id="CHEBI:59789"/>
        <dbReference type="EC" id="2.1.1.107"/>
    </reaction>
</comment>
<comment type="catalytic activity">
    <reaction evidence="1">
        <text>precorrin-2 + NAD(+) = sirohydrochlorin + NADH + 2 H(+)</text>
        <dbReference type="Rhea" id="RHEA:15613"/>
        <dbReference type="ChEBI" id="CHEBI:15378"/>
        <dbReference type="ChEBI" id="CHEBI:57540"/>
        <dbReference type="ChEBI" id="CHEBI:57945"/>
        <dbReference type="ChEBI" id="CHEBI:58351"/>
        <dbReference type="ChEBI" id="CHEBI:58827"/>
        <dbReference type="EC" id="1.3.1.76"/>
    </reaction>
</comment>
<comment type="catalytic activity">
    <reaction evidence="1">
        <text>siroheme + 2 H(+) = sirohydrochlorin + Fe(2+)</text>
        <dbReference type="Rhea" id="RHEA:24360"/>
        <dbReference type="ChEBI" id="CHEBI:15378"/>
        <dbReference type="ChEBI" id="CHEBI:29033"/>
        <dbReference type="ChEBI" id="CHEBI:58351"/>
        <dbReference type="ChEBI" id="CHEBI:60052"/>
        <dbReference type="EC" id="4.99.1.4"/>
    </reaction>
</comment>
<comment type="pathway">
    <text evidence="1">Cofactor biosynthesis; adenosylcobalamin biosynthesis; precorrin-2 from uroporphyrinogen III: step 1/1.</text>
</comment>
<comment type="pathway">
    <text evidence="1">Cofactor biosynthesis; adenosylcobalamin biosynthesis; sirohydrochlorin from precorrin-2: step 1/1.</text>
</comment>
<comment type="pathway">
    <text evidence="1">Porphyrin-containing compound metabolism; siroheme biosynthesis; precorrin-2 from uroporphyrinogen III: step 1/1.</text>
</comment>
<comment type="pathway">
    <text evidence="1">Porphyrin-containing compound metabolism; siroheme biosynthesis; siroheme from sirohydrochlorin: step 1/1.</text>
</comment>
<comment type="pathway">
    <text evidence="1">Porphyrin-containing compound metabolism; siroheme biosynthesis; sirohydrochlorin from precorrin-2: step 1/1.</text>
</comment>
<comment type="similarity">
    <text evidence="1">In the N-terminal section; belongs to the precorrin-2 dehydrogenase / sirohydrochlorin ferrochelatase family.</text>
</comment>
<comment type="similarity">
    <text evidence="1">In the C-terminal section; belongs to the precorrin methyltransferase family.</text>
</comment>
<proteinExistence type="inferred from homology"/>
<evidence type="ECO:0000255" key="1">
    <source>
        <dbReference type="HAMAP-Rule" id="MF_01646"/>
    </source>
</evidence>
<gene>
    <name evidence="1" type="primary">cysG</name>
    <name type="ordered locus">Rmag_0270</name>
</gene>
<accession>A1AVU5</accession>
<dbReference type="EC" id="2.1.1.107" evidence="1"/>
<dbReference type="EC" id="1.3.1.76" evidence="1"/>
<dbReference type="EC" id="4.99.1.4" evidence="1"/>
<dbReference type="EMBL" id="CP000488">
    <property type="protein sequence ID" value="ABL02052.1"/>
    <property type="molecule type" value="Genomic_DNA"/>
</dbReference>
<dbReference type="RefSeq" id="WP_011737677.1">
    <property type="nucleotide sequence ID" value="NC_008610.1"/>
</dbReference>
<dbReference type="SMR" id="A1AVU5"/>
<dbReference type="STRING" id="413404.Rmag_0270"/>
<dbReference type="KEGG" id="rma:Rmag_0270"/>
<dbReference type="eggNOG" id="COG0007">
    <property type="taxonomic scope" value="Bacteria"/>
</dbReference>
<dbReference type="eggNOG" id="COG1648">
    <property type="taxonomic scope" value="Bacteria"/>
</dbReference>
<dbReference type="HOGENOM" id="CLU_011276_2_1_6"/>
<dbReference type="OrthoDB" id="9815856at2"/>
<dbReference type="UniPathway" id="UPA00148">
    <property type="reaction ID" value="UER00211"/>
</dbReference>
<dbReference type="UniPathway" id="UPA00148">
    <property type="reaction ID" value="UER00222"/>
</dbReference>
<dbReference type="UniPathway" id="UPA00262">
    <property type="reaction ID" value="UER00211"/>
</dbReference>
<dbReference type="UniPathway" id="UPA00262">
    <property type="reaction ID" value="UER00222"/>
</dbReference>
<dbReference type="UniPathway" id="UPA00262">
    <property type="reaction ID" value="UER00376"/>
</dbReference>
<dbReference type="Proteomes" id="UP000002587">
    <property type="component" value="Chromosome"/>
</dbReference>
<dbReference type="GO" id="GO:0051287">
    <property type="term" value="F:NAD binding"/>
    <property type="evidence" value="ECO:0007669"/>
    <property type="project" value="InterPro"/>
</dbReference>
<dbReference type="GO" id="GO:0043115">
    <property type="term" value="F:precorrin-2 dehydrogenase activity"/>
    <property type="evidence" value="ECO:0007669"/>
    <property type="project" value="UniProtKB-UniRule"/>
</dbReference>
<dbReference type="GO" id="GO:0051266">
    <property type="term" value="F:sirohydrochlorin ferrochelatase activity"/>
    <property type="evidence" value="ECO:0007669"/>
    <property type="project" value="UniProtKB-EC"/>
</dbReference>
<dbReference type="GO" id="GO:0004851">
    <property type="term" value="F:uroporphyrin-III C-methyltransferase activity"/>
    <property type="evidence" value="ECO:0007669"/>
    <property type="project" value="UniProtKB-UniRule"/>
</dbReference>
<dbReference type="GO" id="GO:0009236">
    <property type="term" value="P:cobalamin biosynthetic process"/>
    <property type="evidence" value="ECO:0007669"/>
    <property type="project" value="UniProtKB-UniRule"/>
</dbReference>
<dbReference type="GO" id="GO:0032259">
    <property type="term" value="P:methylation"/>
    <property type="evidence" value="ECO:0007669"/>
    <property type="project" value="UniProtKB-KW"/>
</dbReference>
<dbReference type="GO" id="GO:0019354">
    <property type="term" value="P:siroheme biosynthetic process"/>
    <property type="evidence" value="ECO:0007669"/>
    <property type="project" value="UniProtKB-UniRule"/>
</dbReference>
<dbReference type="CDD" id="cd11642">
    <property type="entry name" value="SUMT"/>
    <property type="match status" value="1"/>
</dbReference>
<dbReference type="FunFam" id="3.30.160.110:FF:000001">
    <property type="entry name" value="Siroheme synthase"/>
    <property type="match status" value="1"/>
</dbReference>
<dbReference type="FunFam" id="3.30.950.10:FF:000001">
    <property type="entry name" value="Siroheme synthase"/>
    <property type="match status" value="1"/>
</dbReference>
<dbReference type="FunFam" id="3.40.1010.10:FF:000001">
    <property type="entry name" value="Siroheme synthase"/>
    <property type="match status" value="1"/>
</dbReference>
<dbReference type="Gene3D" id="3.40.1010.10">
    <property type="entry name" value="Cobalt-precorrin-4 Transmethylase, Domain 1"/>
    <property type="match status" value="1"/>
</dbReference>
<dbReference type="Gene3D" id="3.30.950.10">
    <property type="entry name" value="Methyltransferase, Cobalt-precorrin-4 Transmethylase, Domain 2"/>
    <property type="match status" value="1"/>
</dbReference>
<dbReference type="Gene3D" id="3.40.50.720">
    <property type="entry name" value="NAD(P)-binding Rossmann-like Domain"/>
    <property type="match status" value="1"/>
</dbReference>
<dbReference type="Gene3D" id="1.10.8.210">
    <property type="entry name" value="Sirohaem synthase, dimerisation domain"/>
    <property type="match status" value="1"/>
</dbReference>
<dbReference type="Gene3D" id="3.30.160.110">
    <property type="entry name" value="Siroheme synthase, domain 2"/>
    <property type="match status" value="1"/>
</dbReference>
<dbReference type="HAMAP" id="MF_01646">
    <property type="entry name" value="Siroheme_synth"/>
    <property type="match status" value="1"/>
</dbReference>
<dbReference type="InterPro" id="IPR000878">
    <property type="entry name" value="4pyrrol_Mease"/>
</dbReference>
<dbReference type="InterPro" id="IPR035996">
    <property type="entry name" value="4pyrrol_Methylase_sf"/>
</dbReference>
<dbReference type="InterPro" id="IPR014777">
    <property type="entry name" value="4pyrrole_Mease_sub1"/>
</dbReference>
<dbReference type="InterPro" id="IPR014776">
    <property type="entry name" value="4pyrrole_Mease_sub2"/>
</dbReference>
<dbReference type="InterPro" id="IPR006366">
    <property type="entry name" value="CobA/CysG_C"/>
</dbReference>
<dbReference type="InterPro" id="IPR036291">
    <property type="entry name" value="NAD(P)-bd_dom_sf"/>
</dbReference>
<dbReference type="InterPro" id="IPR050161">
    <property type="entry name" value="Siro_Cobalamin_biosynth"/>
</dbReference>
<dbReference type="InterPro" id="IPR037115">
    <property type="entry name" value="Sirohaem_synt_dimer_dom_sf"/>
</dbReference>
<dbReference type="InterPro" id="IPR012409">
    <property type="entry name" value="Sirohaem_synth"/>
</dbReference>
<dbReference type="InterPro" id="IPR028281">
    <property type="entry name" value="Sirohaem_synthase_central"/>
</dbReference>
<dbReference type="InterPro" id="IPR019478">
    <property type="entry name" value="Sirohaem_synthase_dimer_dom"/>
</dbReference>
<dbReference type="InterPro" id="IPR006367">
    <property type="entry name" value="Sirohaem_synthase_N"/>
</dbReference>
<dbReference type="InterPro" id="IPR003043">
    <property type="entry name" value="Uropor_MeTrfase_CS"/>
</dbReference>
<dbReference type="NCBIfam" id="TIGR01469">
    <property type="entry name" value="cobA_cysG_Cterm"/>
    <property type="match status" value="1"/>
</dbReference>
<dbReference type="NCBIfam" id="TIGR01470">
    <property type="entry name" value="cysG_Nterm"/>
    <property type="match status" value="1"/>
</dbReference>
<dbReference type="NCBIfam" id="NF004790">
    <property type="entry name" value="PRK06136.1"/>
    <property type="match status" value="1"/>
</dbReference>
<dbReference type="NCBIfam" id="NF007922">
    <property type="entry name" value="PRK10637.1"/>
    <property type="match status" value="1"/>
</dbReference>
<dbReference type="PANTHER" id="PTHR45790:SF1">
    <property type="entry name" value="SIROHEME SYNTHASE"/>
    <property type="match status" value="1"/>
</dbReference>
<dbReference type="PANTHER" id="PTHR45790">
    <property type="entry name" value="SIROHEME SYNTHASE-RELATED"/>
    <property type="match status" value="1"/>
</dbReference>
<dbReference type="Pfam" id="PF10414">
    <property type="entry name" value="CysG_dimeriser"/>
    <property type="match status" value="1"/>
</dbReference>
<dbReference type="Pfam" id="PF13241">
    <property type="entry name" value="NAD_binding_7"/>
    <property type="match status" value="1"/>
</dbReference>
<dbReference type="Pfam" id="PF14824">
    <property type="entry name" value="Sirohm_synth_M"/>
    <property type="match status" value="1"/>
</dbReference>
<dbReference type="Pfam" id="PF00590">
    <property type="entry name" value="TP_methylase"/>
    <property type="match status" value="1"/>
</dbReference>
<dbReference type="PIRSF" id="PIRSF036426">
    <property type="entry name" value="Sirohaem_synth"/>
    <property type="match status" value="1"/>
</dbReference>
<dbReference type="SUPFAM" id="SSF51735">
    <property type="entry name" value="NAD(P)-binding Rossmann-fold domains"/>
    <property type="match status" value="1"/>
</dbReference>
<dbReference type="SUPFAM" id="SSF75615">
    <property type="entry name" value="Siroheme synthase middle domains-like"/>
    <property type="match status" value="1"/>
</dbReference>
<dbReference type="SUPFAM" id="SSF53790">
    <property type="entry name" value="Tetrapyrrole methylase"/>
    <property type="match status" value="1"/>
</dbReference>
<dbReference type="PROSITE" id="PS00840">
    <property type="entry name" value="SUMT_2"/>
    <property type="match status" value="1"/>
</dbReference>
<keyword id="KW-0169">Cobalamin biosynthesis</keyword>
<keyword id="KW-0456">Lyase</keyword>
<keyword id="KW-0489">Methyltransferase</keyword>
<keyword id="KW-0511">Multifunctional enzyme</keyword>
<keyword id="KW-0520">NAD</keyword>
<keyword id="KW-0560">Oxidoreductase</keyword>
<keyword id="KW-0597">Phosphoprotein</keyword>
<keyword id="KW-0627">Porphyrin biosynthesis</keyword>
<keyword id="KW-0949">S-adenosyl-L-methionine</keyword>
<keyword id="KW-0808">Transferase</keyword>
<protein>
    <recommendedName>
        <fullName evidence="1">Siroheme synthase</fullName>
    </recommendedName>
    <domain>
        <recommendedName>
            <fullName evidence="1">Uroporphyrinogen-III C-methyltransferase</fullName>
            <shortName evidence="1">Urogen III methylase</shortName>
            <ecNumber evidence="1">2.1.1.107</ecNumber>
        </recommendedName>
        <alternativeName>
            <fullName evidence="1">SUMT</fullName>
        </alternativeName>
        <alternativeName>
            <fullName evidence="1">Uroporphyrinogen III methylase</fullName>
            <shortName evidence="1">UROM</shortName>
        </alternativeName>
    </domain>
    <domain>
        <recommendedName>
            <fullName evidence="1">Precorrin-2 dehydrogenase</fullName>
            <ecNumber evidence="1">1.3.1.76</ecNumber>
        </recommendedName>
    </domain>
    <domain>
        <recommendedName>
            <fullName evidence="1">Sirohydrochlorin ferrochelatase</fullName>
            <ecNumber evidence="1">4.99.1.4</ecNumber>
        </recommendedName>
    </domain>
</protein>